<accession>O39920</accession>
<accession>Q7M6P2</accession>
<organismHost>
    <name type="scientific">Homo sapiens</name>
    <name type="common">Human</name>
    <dbReference type="NCBI Taxonomy" id="9606"/>
</organismHost>
<reference key="1">
    <citation type="journal article" date="1990" name="Curr. Top. Microbiol. Immunol.">
        <title>Analysis of the protein-coding content of the sequence of human cytomegalovirus strain AD169.</title>
        <authorList>
            <person name="Chee M.S."/>
            <person name="Bankier A.T."/>
            <person name="Beck S."/>
            <person name="Bohni R."/>
            <person name="Brown C.M."/>
            <person name="Cerny R."/>
            <person name="Horsnell T."/>
            <person name="Hutchison C.A. III"/>
            <person name="Kouzarides T."/>
            <person name="Martignetti J.A."/>
            <person name="Preddie E."/>
            <person name="Satchwell S.C."/>
            <person name="Tomlinson P."/>
            <person name="Weston K.M."/>
            <person name="Barrell B.G."/>
        </authorList>
    </citation>
    <scope>NUCLEOTIDE SEQUENCE [LARGE SCALE GENOMIC DNA]</scope>
</reference>
<reference key="2">
    <citation type="journal article" date="1997" name="J. Virol.">
        <title>The published DNA sequence of human cytomegalovirus strain AD169 lacks 929 base pairs of DNA affecting genes UL42 and UL43.</title>
        <authorList>
            <person name="Dargan D.J."/>
            <person name="Jamieson F.E."/>
            <person name="Maclean J."/>
            <person name="Dolan A."/>
            <person name="Addison C."/>
            <person name="McGeoch D.J."/>
        </authorList>
    </citation>
    <scope>NUCLEOTIDE SEQUENCE [GENOMIC DNA]</scope>
</reference>
<reference key="3">
    <citation type="journal article" date="2003" name="J. Gen. Virol.">
        <title>The human cytomegalovirus genome revisited: comparison with the chimpanzee cytomegalovirus genome.</title>
        <authorList>
            <person name="Davison A.J."/>
            <person name="Dolan A."/>
            <person name="Akter P."/>
            <person name="Addison C."/>
            <person name="Dargan D.J."/>
            <person name="Alcendor D.J."/>
            <person name="McGeoch D.J."/>
            <person name="Hayward G.S."/>
        </authorList>
    </citation>
    <scope>GENOME REANNOTATION</scope>
</reference>
<reference key="4">
    <citation type="journal article" date="2003" name="J. Gen. Virol.">
        <authorList>
            <person name="Davison A.J."/>
            <person name="Dolan A."/>
            <person name="Akter P."/>
            <person name="Addison C."/>
            <person name="Dargan D.J."/>
            <person name="Alcendor D.J."/>
            <person name="McGeoch D.J."/>
            <person name="Hayward G.S."/>
        </authorList>
    </citation>
    <scope>ERRATUM OF PUBMED:12533697</scope>
</reference>
<reference key="5">
    <citation type="journal article" date="2004" name="J. Virol.">
        <title>Identification of proteins in human cytomegalovirus (HCMV) particles: the HCMV proteome.</title>
        <authorList>
            <person name="Varnum S.M."/>
            <person name="Streblow D.N."/>
            <person name="Monroe M.E."/>
            <person name="Smith P."/>
            <person name="Auberry K.J."/>
            <person name="Pasa-Tolic L."/>
            <person name="Wang D."/>
            <person name="Camp D.G. II"/>
            <person name="Rodland K."/>
            <person name="Wiley S."/>
            <person name="Britt W."/>
            <person name="Shenk T."/>
            <person name="Smith R.D."/>
            <person name="Nelson J.A."/>
        </authorList>
    </citation>
    <scope>IDENTIFICATION</scope>
    <scope>SUBCELLULAR LOCATION</scope>
</reference>
<reference key="6">
    <citation type="journal article" date="2004" name="J. Virol.">
        <authorList>
            <person name="Varnum S.M."/>
            <person name="Streblow D.N."/>
            <person name="Monroe M.E."/>
            <person name="Smith P."/>
            <person name="Auberry K.J."/>
            <person name="Pasa-Tolic L."/>
            <person name="Wang D."/>
            <person name="Camp D.G. II"/>
            <person name="Rodland K."/>
            <person name="Wiley S."/>
            <person name="Britt W."/>
            <person name="Shenk T."/>
            <person name="Smith R.D."/>
            <person name="Nelson J.A."/>
        </authorList>
    </citation>
    <scope>ERRATUM OF PUBMED:15452216</scope>
</reference>
<sequence>MTLFCRTANSTAGYVDMNVCIGMIGVVCFVFGVFILIFCSTLKAFYVRQKTYHLLGTESDDEETTVWEKRRMESDTDF</sequence>
<name>UL41A_HCMVA</name>
<feature type="chain" id="PRO_0000115324" description="Protein UL41A">
    <location>
        <begin position="1"/>
        <end position="78"/>
    </location>
</feature>
<feature type="transmembrane region" description="Helical" evidence="1">
    <location>
        <begin position="19"/>
        <end position="39"/>
    </location>
</feature>
<feature type="glycosylation site" description="N-linked (GlcNAc...) asparagine; by host" evidence="1">
    <location>
        <position position="9"/>
    </location>
</feature>
<comment type="subcellular location">
    <subcellularLocation>
        <location evidence="2">Virion membrane</location>
        <topology evidence="2">Single-pass membrane protein</topology>
    </subcellularLocation>
</comment>
<comment type="similarity">
    <text evidence="3">Belongs to the HHV-5 UL41A protein family.</text>
</comment>
<dbReference type="EMBL" id="X17403">
    <property type="status" value="NOT_ANNOTATED_CDS"/>
    <property type="molecule type" value="Genomic_DNA"/>
</dbReference>
<dbReference type="EMBL" id="Y13735">
    <property type="protein sequence ID" value="CAA74073.1"/>
    <property type="molecule type" value="Genomic_DNA"/>
</dbReference>
<dbReference type="EMBL" id="BK000394">
    <property type="protein sequence ID" value="DAA00146.1"/>
    <property type="molecule type" value="Genomic_DNA"/>
</dbReference>
<dbReference type="RefSeq" id="YP_081499.1">
    <property type="nucleotide sequence ID" value="NC_006273.2"/>
</dbReference>
<dbReference type="SMR" id="O39920"/>
<dbReference type="GlyCosmos" id="O39920">
    <property type="glycosylation" value="1 site, No reported glycans"/>
</dbReference>
<dbReference type="DNASU" id="3077475"/>
<dbReference type="GeneID" id="3077475"/>
<dbReference type="KEGG" id="vg:3077475"/>
<dbReference type="Proteomes" id="UP000008991">
    <property type="component" value="Segment"/>
</dbReference>
<dbReference type="Proteomes" id="UP000008992">
    <property type="component" value="Segment"/>
</dbReference>
<dbReference type="GO" id="GO:0016020">
    <property type="term" value="C:membrane"/>
    <property type="evidence" value="ECO:0007669"/>
    <property type="project" value="UniProtKB-KW"/>
</dbReference>
<dbReference type="GO" id="GO:0055036">
    <property type="term" value="C:virion membrane"/>
    <property type="evidence" value="ECO:0007669"/>
    <property type="project" value="UniProtKB-SubCell"/>
</dbReference>
<dbReference type="InterPro" id="IPR020141">
    <property type="entry name" value="Herpesvirus_UL41A"/>
</dbReference>
<dbReference type="Pfam" id="PF17591">
    <property type="entry name" value="UL41A"/>
    <property type="match status" value="1"/>
</dbReference>
<organism>
    <name type="scientific">Human cytomegalovirus (strain AD169)</name>
    <name type="common">HHV-5</name>
    <name type="synonym">Human herpesvirus 5</name>
    <dbReference type="NCBI Taxonomy" id="10360"/>
    <lineage>
        <taxon>Viruses</taxon>
        <taxon>Duplodnaviria</taxon>
        <taxon>Heunggongvirae</taxon>
        <taxon>Peploviricota</taxon>
        <taxon>Herviviricetes</taxon>
        <taxon>Herpesvirales</taxon>
        <taxon>Orthoherpesviridae</taxon>
        <taxon>Betaherpesvirinae</taxon>
        <taxon>Cytomegalovirus</taxon>
        <taxon>Cytomegalovirus humanbeta5</taxon>
        <taxon>Human cytomegalovirus</taxon>
    </lineage>
</organism>
<protein>
    <recommendedName>
        <fullName>Protein UL41A</fullName>
    </recommendedName>
</protein>
<gene>
    <name type="primary">UL41A</name>
</gene>
<keyword id="KW-0325">Glycoprotein</keyword>
<keyword id="KW-0472">Membrane</keyword>
<keyword id="KW-1185">Reference proteome</keyword>
<keyword id="KW-0812">Transmembrane</keyword>
<keyword id="KW-1133">Transmembrane helix</keyword>
<keyword id="KW-0946">Virion</keyword>
<evidence type="ECO:0000255" key="1"/>
<evidence type="ECO:0000269" key="2">
    <source>
    </source>
</evidence>
<evidence type="ECO:0000305" key="3"/>
<proteinExistence type="inferred from homology"/>